<reference key="1">
    <citation type="journal article" date="2011" name="Stand. Genomic Sci.">
        <title>Complete genome sequence of Rhodospirillum rubrum type strain (S1).</title>
        <authorList>
            <person name="Munk A.C."/>
            <person name="Copeland A."/>
            <person name="Lucas S."/>
            <person name="Lapidus A."/>
            <person name="Del Rio T.G."/>
            <person name="Barry K."/>
            <person name="Detter J.C."/>
            <person name="Hammon N."/>
            <person name="Israni S."/>
            <person name="Pitluck S."/>
            <person name="Brettin T."/>
            <person name="Bruce D."/>
            <person name="Han C."/>
            <person name="Tapia R."/>
            <person name="Gilna P."/>
            <person name="Schmutz J."/>
            <person name="Larimer F."/>
            <person name="Land M."/>
            <person name="Kyrpides N.C."/>
            <person name="Mavromatis K."/>
            <person name="Richardson P."/>
            <person name="Rohde M."/>
            <person name="Goeker M."/>
            <person name="Klenk H.P."/>
            <person name="Zhang Y."/>
            <person name="Roberts G.P."/>
            <person name="Reslewic S."/>
            <person name="Schwartz D.C."/>
        </authorList>
    </citation>
    <scope>NUCLEOTIDE SEQUENCE [LARGE SCALE GENOMIC DNA]</scope>
    <source>
        <strain>ATCC 11170 / ATH 1.1.1 / DSM 467 / LMG 4362 / NCIMB 8255 / S1</strain>
    </source>
</reference>
<comment type="function">
    <text evidence="1">Converts 2C-methyl-D-erythritol 2,4-cyclodiphosphate (ME-2,4cPP) into 1-hydroxy-2-methyl-2-(E)-butenyl 4-diphosphate.</text>
</comment>
<comment type="catalytic activity">
    <reaction evidence="1">
        <text>(2E)-4-hydroxy-3-methylbut-2-enyl diphosphate + oxidized [flavodoxin] + H2O + 2 H(+) = 2-C-methyl-D-erythritol 2,4-cyclic diphosphate + reduced [flavodoxin]</text>
        <dbReference type="Rhea" id="RHEA:43604"/>
        <dbReference type="Rhea" id="RHEA-COMP:10622"/>
        <dbReference type="Rhea" id="RHEA-COMP:10623"/>
        <dbReference type="ChEBI" id="CHEBI:15377"/>
        <dbReference type="ChEBI" id="CHEBI:15378"/>
        <dbReference type="ChEBI" id="CHEBI:57618"/>
        <dbReference type="ChEBI" id="CHEBI:58210"/>
        <dbReference type="ChEBI" id="CHEBI:58483"/>
        <dbReference type="ChEBI" id="CHEBI:128753"/>
        <dbReference type="EC" id="1.17.7.3"/>
    </reaction>
</comment>
<comment type="cofactor">
    <cofactor evidence="1">
        <name>[4Fe-4S] cluster</name>
        <dbReference type="ChEBI" id="CHEBI:49883"/>
    </cofactor>
    <text evidence="1">Binds 1 [4Fe-4S] cluster.</text>
</comment>
<comment type="pathway">
    <text evidence="1">Isoprenoid biosynthesis; isopentenyl diphosphate biosynthesis via DXP pathway; isopentenyl diphosphate from 1-deoxy-D-xylulose 5-phosphate: step 5/6.</text>
</comment>
<comment type="similarity">
    <text evidence="1">Belongs to the IspG family.</text>
</comment>
<proteinExistence type="inferred from homology"/>
<accession>Q2RWE4</accession>
<keyword id="KW-0004">4Fe-4S</keyword>
<keyword id="KW-0408">Iron</keyword>
<keyword id="KW-0411">Iron-sulfur</keyword>
<keyword id="KW-0414">Isoprene biosynthesis</keyword>
<keyword id="KW-0479">Metal-binding</keyword>
<keyword id="KW-0560">Oxidoreductase</keyword>
<keyword id="KW-1185">Reference proteome</keyword>
<evidence type="ECO:0000255" key="1">
    <source>
        <dbReference type="HAMAP-Rule" id="MF_00159"/>
    </source>
</evidence>
<feature type="chain" id="PRO_1000011511" description="4-hydroxy-3-methylbut-2-en-1-yl diphosphate synthase (flavodoxin)">
    <location>
        <begin position="1"/>
        <end position="384"/>
    </location>
</feature>
<feature type="binding site" evidence="1">
    <location>
        <position position="272"/>
    </location>
    <ligand>
        <name>[4Fe-4S] cluster</name>
        <dbReference type="ChEBI" id="CHEBI:49883"/>
    </ligand>
</feature>
<feature type="binding site" evidence="1">
    <location>
        <position position="275"/>
    </location>
    <ligand>
        <name>[4Fe-4S] cluster</name>
        <dbReference type="ChEBI" id="CHEBI:49883"/>
    </ligand>
</feature>
<feature type="binding site" evidence="1">
    <location>
        <position position="307"/>
    </location>
    <ligand>
        <name>[4Fe-4S] cluster</name>
        <dbReference type="ChEBI" id="CHEBI:49883"/>
    </ligand>
</feature>
<feature type="binding site" evidence="1">
    <location>
        <position position="314"/>
    </location>
    <ligand>
        <name>[4Fe-4S] cluster</name>
        <dbReference type="ChEBI" id="CHEBI:49883"/>
    </ligand>
</feature>
<gene>
    <name evidence="1" type="primary">ispG</name>
    <name type="ordered locus">Rru_A0747</name>
</gene>
<protein>
    <recommendedName>
        <fullName evidence="1">4-hydroxy-3-methylbut-2-en-1-yl diphosphate synthase (flavodoxin)</fullName>
        <ecNumber evidence="1">1.17.7.3</ecNumber>
    </recommendedName>
    <alternativeName>
        <fullName evidence="1">1-hydroxy-2-methyl-2-(E)-butenyl 4-diphosphate synthase</fullName>
    </alternativeName>
</protein>
<name>ISPG_RHORT</name>
<dbReference type="EC" id="1.17.7.3" evidence="1"/>
<dbReference type="EMBL" id="CP000230">
    <property type="protein sequence ID" value="ABC21551.1"/>
    <property type="molecule type" value="Genomic_DNA"/>
</dbReference>
<dbReference type="RefSeq" id="WP_011388505.1">
    <property type="nucleotide sequence ID" value="NC_007643.1"/>
</dbReference>
<dbReference type="RefSeq" id="YP_425838.1">
    <property type="nucleotide sequence ID" value="NC_007643.1"/>
</dbReference>
<dbReference type="SMR" id="Q2RWE4"/>
<dbReference type="STRING" id="269796.Rru_A0747"/>
<dbReference type="EnsemblBacteria" id="ABC21551">
    <property type="protein sequence ID" value="ABC21551"/>
    <property type="gene ID" value="Rru_A0747"/>
</dbReference>
<dbReference type="KEGG" id="rru:Rru_A0747"/>
<dbReference type="PATRIC" id="fig|269796.9.peg.799"/>
<dbReference type="eggNOG" id="COG0821">
    <property type="taxonomic scope" value="Bacteria"/>
</dbReference>
<dbReference type="HOGENOM" id="CLU_042258_0_0_5"/>
<dbReference type="PhylomeDB" id="Q2RWE4"/>
<dbReference type="UniPathway" id="UPA00056">
    <property type="reaction ID" value="UER00096"/>
</dbReference>
<dbReference type="Proteomes" id="UP000001929">
    <property type="component" value="Chromosome"/>
</dbReference>
<dbReference type="GO" id="GO:0051539">
    <property type="term" value="F:4 iron, 4 sulfur cluster binding"/>
    <property type="evidence" value="ECO:0007669"/>
    <property type="project" value="UniProtKB-UniRule"/>
</dbReference>
<dbReference type="GO" id="GO:0046429">
    <property type="term" value="F:4-hydroxy-3-methylbut-2-en-1-yl diphosphate synthase activity (ferredoxin)"/>
    <property type="evidence" value="ECO:0007669"/>
    <property type="project" value="UniProtKB-UniRule"/>
</dbReference>
<dbReference type="GO" id="GO:0141197">
    <property type="term" value="F:4-hydroxy-3-methylbut-2-enyl-diphosphate synthase activity (flavodoxin)"/>
    <property type="evidence" value="ECO:0007669"/>
    <property type="project" value="UniProtKB-EC"/>
</dbReference>
<dbReference type="GO" id="GO:0005506">
    <property type="term" value="F:iron ion binding"/>
    <property type="evidence" value="ECO:0007669"/>
    <property type="project" value="InterPro"/>
</dbReference>
<dbReference type="GO" id="GO:0019288">
    <property type="term" value="P:isopentenyl diphosphate biosynthetic process, methylerythritol 4-phosphate pathway"/>
    <property type="evidence" value="ECO:0007669"/>
    <property type="project" value="UniProtKB-UniRule"/>
</dbReference>
<dbReference type="GO" id="GO:0016114">
    <property type="term" value="P:terpenoid biosynthetic process"/>
    <property type="evidence" value="ECO:0007669"/>
    <property type="project" value="InterPro"/>
</dbReference>
<dbReference type="FunFam" id="3.20.20.20:FF:000001">
    <property type="entry name" value="4-hydroxy-3-methylbut-2-en-1-yl diphosphate synthase (flavodoxin)"/>
    <property type="match status" value="1"/>
</dbReference>
<dbReference type="Gene3D" id="3.20.20.20">
    <property type="entry name" value="Dihydropteroate synthase-like"/>
    <property type="match status" value="1"/>
</dbReference>
<dbReference type="Gene3D" id="3.30.413.10">
    <property type="entry name" value="Sulfite Reductase Hemoprotein, domain 1"/>
    <property type="match status" value="1"/>
</dbReference>
<dbReference type="HAMAP" id="MF_00159">
    <property type="entry name" value="IspG"/>
    <property type="match status" value="1"/>
</dbReference>
<dbReference type="InterPro" id="IPR011005">
    <property type="entry name" value="Dihydropteroate_synth-like_sf"/>
</dbReference>
<dbReference type="InterPro" id="IPR016425">
    <property type="entry name" value="IspG_bac"/>
</dbReference>
<dbReference type="InterPro" id="IPR004588">
    <property type="entry name" value="IspG_bac-typ"/>
</dbReference>
<dbReference type="InterPro" id="IPR045854">
    <property type="entry name" value="NO2/SO3_Rdtase_4Fe4S_sf"/>
</dbReference>
<dbReference type="NCBIfam" id="TIGR00612">
    <property type="entry name" value="ispG_gcpE"/>
    <property type="match status" value="1"/>
</dbReference>
<dbReference type="NCBIfam" id="NF001540">
    <property type="entry name" value="PRK00366.1"/>
    <property type="match status" value="1"/>
</dbReference>
<dbReference type="PANTHER" id="PTHR30454">
    <property type="entry name" value="4-HYDROXY-3-METHYLBUT-2-EN-1-YL DIPHOSPHATE SYNTHASE"/>
    <property type="match status" value="1"/>
</dbReference>
<dbReference type="PANTHER" id="PTHR30454:SF0">
    <property type="entry name" value="4-HYDROXY-3-METHYLBUT-2-EN-1-YL DIPHOSPHATE SYNTHASE (FERREDOXIN), CHLOROPLASTIC"/>
    <property type="match status" value="1"/>
</dbReference>
<dbReference type="Pfam" id="PF04551">
    <property type="entry name" value="GcpE"/>
    <property type="match status" value="1"/>
</dbReference>
<dbReference type="PIRSF" id="PIRSF004640">
    <property type="entry name" value="IspG"/>
    <property type="match status" value="1"/>
</dbReference>
<dbReference type="SUPFAM" id="SSF51717">
    <property type="entry name" value="Dihydropteroate synthetase-like"/>
    <property type="match status" value="1"/>
</dbReference>
<dbReference type="SUPFAM" id="SSF56014">
    <property type="entry name" value="Nitrite and sulphite reductase 4Fe-4S domain-like"/>
    <property type="match status" value="1"/>
</dbReference>
<sequence length="384" mass="40786">MSVRTYRDISRRVSRKIRVGSVFVGGDAPVSVQTMTNTLTTDVAATVAQIRRAQEAGADIVRVSCPDEESTAALKAIISQVEVPIVADIHFHYKRAIEAAEAGAACLRINPGNIGSAERVREVVRAAKDHGCSMRIGVNAGSLEKELLEKYGEPCPEAMVESALSHARILEDNDFTEFKISVKASDAFLAVAAYKALAEACDYPLHLGITEAGGLRGGTVKSAIGIGSMLWAGIGDTIRVSLSAQPEEEVKVGFEILKSLNLRHRGVRVVSCPSCARQGFDVIKTVEVLESRLSHIQTPITLSIIGCVVNGPGEARETDIGLTGGGNLAKEGALNKVYVSGIPDHTINNEAMVDHLVALVEKKAAEIEALEAARKAKEPATAAE</sequence>
<organism>
    <name type="scientific">Rhodospirillum rubrum (strain ATCC 11170 / ATH 1.1.1 / DSM 467 / LMG 4362 / NCIMB 8255 / S1)</name>
    <dbReference type="NCBI Taxonomy" id="269796"/>
    <lineage>
        <taxon>Bacteria</taxon>
        <taxon>Pseudomonadati</taxon>
        <taxon>Pseudomonadota</taxon>
        <taxon>Alphaproteobacteria</taxon>
        <taxon>Rhodospirillales</taxon>
        <taxon>Rhodospirillaceae</taxon>
        <taxon>Rhodospirillum</taxon>
    </lineage>
</organism>